<dbReference type="EMBL" id="X97560">
    <property type="protein sequence ID" value="CAA66166.1"/>
    <property type="molecule type" value="Genomic_DNA"/>
</dbReference>
<dbReference type="EMBL" id="Z73130">
    <property type="protein sequence ID" value="CAA97473.1"/>
    <property type="molecule type" value="Genomic_DNA"/>
</dbReference>
<dbReference type="EMBL" id="AY692734">
    <property type="protein sequence ID" value="AAT92753.1"/>
    <property type="molecule type" value="Genomic_DNA"/>
</dbReference>
<dbReference type="EMBL" id="BK006945">
    <property type="protein sequence ID" value="DAA09295.1"/>
    <property type="molecule type" value="Genomic_DNA"/>
</dbReference>
<dbReference type="PIR" id="S64773">
    <property type="entry name" value="S64773"/>
</dbReference>
<dbReference type="RefSeq" id="NP_013075.1">
    <property type="nucleotide sequence ID" value="NM_001181845.1"/>
</dbReference>
<dbReference type="BioGRID" id="31228">
    <property type="interactions" value="26"/>
</dbReference>
<dbReference type="FunCoup" id="Q12370">
    <property type="interactions" value="40"/>
</dbReference>
<dbReference type="STRING" id="4932.YLL025W"/>
<dbReference type="PaxDb" id="4932-YLL025W"/>
<dbReference type="TopDownProteomics" id="Q12370"/>
<dbReference type="EnsemblFungi" id="YLL025W_mRNA">
    <property type="protein sequence ID" value="YLL025W"/>
    <property type="gene ID" value="YLL025W"/>
</dbReference>
<dbReference type="GeneID" id="850635"/>
<dbReference type="KEGG" id="sce:YLL025W"/>
<dbReference type="AGR" id="SGD:S000003948"/>
<dbReference type="SGD" id="S000003948">
    <property type="gene designation" value="PAU17"/>
</dbReference>
<dbReference type="VEuPathDB" id="FungiDB:YLL025W"/>
<dbReference type="eggNOG" id="ENOG502SR1B">
    <property type="taxonomic scope" value="Eukaryota"/>
</dbReference>
<dbReference type="GeneTree" id="ENSGT00940000176276"/>
<dbReference type="HOGENOM" id="CLU_136376_0_0_1"/>
<dbReference type="InParanoid" id="Q12370"/>
<dbReference type="OrthoDB" id="4060994at2759"/>
<dbReference type="BioCyc" id="YEAST:G3O-32129-MONOMER"/>
<dbReference type="BioGRID-ORCS" id="850635">
    <property type="hits" value="1 hit in 10 CRISPR screens"/>
</dbReference>
<dbReference type="PRO" id="PR:Q12370"/>
<dbReference type="Proteomes" id="UP000002311">
    <property type="component" value="Chromosome XII"/>
</dbReference>
<dbReference type="RNAct" id="Q12370">
    <property type="molecule type" value="protein"/>
</dbReference>
<dbReference type="GO" id="GO:0009277">
    <property type="term" value="C:fungal-type cell wall"/>
    <property type="evidence" value="ECO:0000318"/>
    <property type="project" value="GO_Central"/>
</dbReference>
<dbReference type="GO" id="GO:0000324">
    <property type="term" value="C:fungal-type vacuole"/>
    <property type="evidence" value="ECO:0007005"/>
    <property type="project" value="SGD"/>
</dbReference>
<dbReference type="GO" id="GO:0005199">
    <property type="term" value="F:structural constituent of cell wall"/>
    <property type="evidence" value="ECO:0000318"/>
    <property type="project" value="GO_Central"/>
</dbReference>
<dbReference type="GO" id="GO:0031505">
    <property type="term" value="P:fungal-type cell wall organization"/>
    <property type="evidence" value="ECO:0000318"/>
    <property type="project" value="GO_Central"/>
</dbReference>
<dbReference type="InterPro" id="IPR000992">
    <property type="entry name" value="SRP1_TIP1"/>
</dbReference>
<dbReference type="InterPro" id="IPR050788">
    <property type="entry name" value="Yeast_SRP1/TIP1_CWP"/>
</dbReference>
<dbReference type="PANTHER" id="PTHR31002:SF34">
    <property type="entry name" value="CELL WALL PROTEIN CWP1-RELATED"/>
    <property type="match status" value="1"/>
</dbReference>
<dbReference type="PANTHER" id="PTHR31002">
    <property type="entry name" value="SERIPAUPERIN"/>
    <property type="match status" value="1"/>
</dbReference>
<dbReference type="Pfam" id="PF00660">
    <property type="entry name" value="SRP1_TIP1"/>
    <property type="match status" value="1"/>
</dbReference>
<dbReference type="PROSITE" id="PS00724">
    <property type="entry name" value="SRP1_TIP1"/>
    <property type="match status" value="1"/>
</dbReference>
<organism>
    <name type="scientific">Saccharomyces cerevisiae (strain ATCC 204508 / S288c)</name>
    <name type="common">Baker's yeast</name>
    <dbReference type="NCBI Taxonomy" id="559292"/>
    <lineage>
        <taxon>Eukaryota</taxon>
        <taxon>Fungi</taxon>
        <taxon>Dikarya</taxon>
        <taxon>Ascomycota</taxon>
        <taxon>Saccharomycotina</taxon>
        <taxon>Saccharomycetes</taxon>
        <taxon>Saccharomycetales</taxon>
        <taxon>Saccharomycetaceae</taxon>
        <taxon>Saccharomyces</taxon>
    </lineage>
</organism>
<gene>
    <name type="primary">PAU17</name>
    <name type="ordered locus">YLL025W</name>
    <name type="ORF">L0968</name>
</gene>
<accession>Q12370</accession>
<accession>D6VXX9</accession>
<accession>Q6B2J6</accession>
<comment type="similarity">
    <text evidence="2">Belongs to the SRP1/TIP1 family. Seripauperin subfamily.</text>
</comment>
<proteinExistence type="inferred from homology"/>
<keyword id="KW-1185">Reference proteome</keyword>
<keyword id="KW-0732">Signal</keyword>
<evidence type="ECO:0000255" key="1"/>
<evidence type="ECO:0000305" key="2"/>
<protein>
    <recommendedName>
        <fullName>Seripauperin-17</fullName>
    </recommendedName>
</protein>
<name>PAU17_YEAST</name>
<feature type="signal peptide" evidence="1">
    <location>
        <begin position="1"/>
        <end position="20"/>
    </location>
</feature>
<feature type="chain" id="PRO_0000033248" description="Seripauperin-17">
    <location>
        <begin position="21"/>
        <end position="124"/>
    </location>
</feature>
<feature type="sequence conflict" description="In Ref. 4; AAT92753." evidence="2" ref="4">
    <original>A</original>
    <variation>T</variation>
    <location>
        <position position="115"/>
    </location>
</feature>
<sequence>MVKLTSIAAGVAAIAAGVAAAPATTTLSPSDERVNLVELGVYVSDIRAHLAEYYMFQAAHPTETYPVEIAEAVFNYGDFTTMLTGIPADQVTRVITGVPWYSTRLRPAISSALSADGIYTAVPN</sequence>
<reference key="1">
    <citation type="journal article" date="1997" name="Yeast">
        <title>The sequence of 32kb on the left arm of yeast chromosome XII reveals six known genes, a new member of the seripauperins family and a new ABC transporter homologous to the human multidrug resistance protein.</title>
        <authorList>
            <person name="Purnelle B."/>
            <person name="Goffeau A."/>
        </authorList>
    </citation>
    <scope>NUCLEOTIDE SEQUENCE [GENOMIC DNA]</scope>
    <source>
        <strain>ATCC 204508 / S288c</strain>
    </source>
</reference>
<reference key="2">
    <citation type="journal article" date="1997" name="Nature">
        <title>The nucleotide sequence of Saccharomyces cerevisiae chromosome XII.</title>
        <authorList>
            <person name="Johnston M."/>
            <person name="Hillier L.W."/>
            <person name="Riles L."/>
            <person name="Albermann K."/>
            <person name="Andre B."/>
            <person name="Ansorge W."/>
            <person name="Benes V."/>
            <person name="Brueckner M."/>
            <person name="Delius H."/>
            <person name="Dubois E."/>
            <person name="Duesterhoeft A."/>
            <person name="Entian K.-D."/>
            <person name="Floeth M."/>
            <person name="Goffeau A."/>
            <person name="Hebling U."/>
            <person name="Heumann K."/>
            <person name="Heuss-Neitzel D."/>
            <person name="Hilbert H."/>
            <person name="Hilger F."/>
            <person name="Kleine K."/>
            <person name="Koetter P."/>
            <person name="Louis E.J."/>
            <person name="Messenguy F."/>
            <person name="Mewes H.-W."/>
            <person name="Miosga T."/>
            <person name="Moestl D."/>
            <person name="Mueller-Auer S."/>
            <person name="Nentwich U."/>
            <person name="Obermaier B."/>
            <person name="Piravandi E."/>
            <person name="Pohl T.M."/>
            <person name="Portetelle D."/>
            <person name="Purnelle B."/>
            <person name="Rechmann S."/>
            <person name="Rieger M."/>
            <person name="Rinke M."/>
            <person name="Rose M."/>
            <person name="Scharfe M."/>
            <person name="Scherens B."/>
            <person name="Scholler P."/>
            <person name="Schwager C."/>
            <person name="Schwarz S."/>
            <person name="Underwood A.P."/>
            <person name="Urrestarazu L.A."/>
            <person name="Vandenbol M."/>
            <person name="Verhasselt P."/>
            <person name="Vierendeels F."/>
            <person name="Voet M."/>
            <person name="Volckaert G."/>
            <person name="Voss H."/>
            <person name="Wambutt R."/>
            <person name="Wedler E."/>
            <person name="Wedler H."/>
            <person name="Zimmermann F.K."/>
            <person name="Zollner A."/>
            <person name="Hani J."/>
            <person name="Hoheisel J.D."/>
        </authorList>
    </citation>
    <scope>NUCLEOTIDE SEQUENCE [LARGE SCALE GENOMIC DNA]</scope>
    <source>
        <strain>ATCC 204508 / S288c</strain>
    </source>
</reference>
<reference key="3">
    <citation type="journal article" date="2014" name="G3 (Bethesda)">
        <title>The reference genome sequence of Saccharomyces cerevisiae: Then and now.</title>
        <authorList>
            <person name="Engel S.R."/>
            <person name="Dietrich F.S."/>
            <person name="Fisk D.G."/>
            <person name="Binkley G."/>
            <person name="Balakrishnan R."/>
            <person name="Costanzo M.C."/>
            <person name="Dwight S.S."/>
            <person name="Hitz B.C."/>
            <person name="Karra K."/>
            <person name="Nash R.S."/>
            <person name="Weng S."/>
            <person name="Wong E.D."/>
            <person name="Lloyd P."/>
            <person name="Skrzypek M.S."/>
            <person name="Miyasato S.R."/>
            <person name="Simison M."/>
            <person name="Cherry J.M."/>
        </authorList>
    </citation>
    <scope>GENOME REANNOTATION</scope>
    <source>
        <strain>ATCC 204508 / S288c</strain>
    </source>
</reference>
<reference key="4">
    <citation type="journal article" date="2007" name="Genome Res.">
        <title>Approaching a complete repository of sequence-verified protein-encoding clones for Saccharomyces cerevisiae.</title>
        <authorList>
            <person name="Hu Y."/>
            <person name="Rolfs A."/>
            <person name="Bhullar B."/>
            <person name="Murthy T.V.S."/>
            <person name="Zhu C."/>
            <person name="Berger M.F."/>
            <person name="Camargo A.A."/>
            <person name="Kelley F."/>
            <person name="McCarron S."/>
            <person name="Jepson D."/>
            <person name="Richardson A."/>
            <person name="Raphael J."/>
            <person name="Moreira D."/>
            <person name="Taycher E."/>
            <person name="Zuo D."/>
            <person name="Mohr S."/>
            <person name="Kane M.F."/>
            <person name="Williamson J."/>
            <person name="Simpson A.J.G."/>
            <person name="Bulyk M.L."/>
            <person name="Harlow E."/>
            <person name="Marsischky G."/>
            <person name="Kolodner R.D."/>
            <person name="LaBaer J."/>
        </authorList>
    </citation>
    <scope>NUCLEOTIDE SEQUENCE [GENOMIC DNA]</scope>
    <source>
        <strain>ATCC 204508 / S288c</strain>
    </source>
</reference>